<reference key="1">
    <citation type="journal article" date="2001" name="Science">
        <title>Comparative genomics of Listeria species.</title>
        <authorList>
            <person name="Glaser P."/>
            <person name="Frangeul L."/>
            <person name="Buchrieser C."/>
            <person name="Rusniok C."/>
            <person name="Amend A."/>
            <person name="Baquero F."/>
            <person name="Berche P."/>
            <person name="Bloecker H."/>
            <person name="Brandt P."/>
            <person name="Chakraborty T."/>
            <person name="Charbit A."/>
            <person name="Chetouani F."/>
            <person name="Couve E."/>
            <person name="de Daruvar A."/>
            <person name="Dehoux P."/>
            <person name="Domann E."/>
            <person name="Dominguez-Bernal G."/>
            <person name="Duchaud E."/>
            <person name="Durant L."/>
            <person name="Dussurget O."/>
            <person name="Entian K.-D."/>
            <person name="Fsihi H."/>
            <person name="Garcia-del Portillo F."/>
            <person name="Garrido P."/>
            <person name="Gautier L."/>
            <person name="Goebel W."/>
            <person name="Gomez-Lopez N."/>
            <person name="Hain T."/>
            <person name="Hauf J."/>
            <person name="Jackson D."/>
            <person name="Jones L.-M."/>
            <person name="Kaerst U."/>
            <person name="Kreft J."/>
            <person name="Kuhn M."/>
            <person name="Kunst F."/>
            <person name="Kurapkat G."/>
            <person name="Madueno E."/>
            <person name="Maitournam A."/>
            <person name="Mata Vicente J."/>
            <person name="Ng E."/>
            <person name="Nedjari H."/>
            <person name="Nordsiek G."/>
            <person name="Novella S."/>
            <person name="de Pablos B."/>
            <person name="Perez-Diaz J.-C."/>
            <person name="Purcell R."/>
            <person name="Remmel B."/>
            <person name="Rose M."/>
            <person name="Schlueter T."/>
            <person name="Simoes N."/>
            <person name="Tierrez A."/>
            <person name="Vazquez-Boland J.-A."/>
            <person name="Voss H."/>
            <person name="Wehland J."/>
            <person name="Cossart P."/>
        </authorList>
    </citation>
    <scope>NUCLEOTIDE SEQUENCE [LARGE SCALE GENOMIC DNA]</scope>
    <source>
        <strain>ATCC BAA-679 / EGD-e</strain>
    </source>
</reference>
<evidence type="ECO:0000250" key="1"/>
<evidence type="ECO:0000255" key="2">
    <source>
        <dbReference type="HAMAP-Rule" id="MF_00047"/>
    </source>
</evidence>
<dbReference type="EC" id="6.3.2.4" evidence="2"/>
<dbReference type="EMBL" id="AL591977">
    <property type="protein sequence ID" value="CAC98933.1"/>
    <property type="molecule type" value="Genomic_DNA"/>
</dbReference>
<dbReference type="PIR" id="AG1181">
    <property type="entry name" value="AG1181"/>
</dbReference>
<dbReference type="RefSeq" id="NP_464381.1">
    <property type="nucleotide sequence ID" value="NC_003210.1"/>
</dbReference>
<dbReference type="RefSeq" id="WP_010989595.1">
    <property type="nucleotide sequence ID" value="NZ_CP149495.1"/>
</dbReference>
<dbReference type="SMR" id="Q8Y8P1"/>
<dbReference type="STRING" id="169963.gene:17593506"/>
<dbReference type="PaxDb" id="169963-lmo0855"/>
<dbReference type="EnsemblBacteria" id="CAC98933">
    <property type="protein sequence ID" value="CAC98933"/>
    <property type="gene ID" value="CAC98933"/>
</dbReference>
<dbReference type="GeneID" id="985238"/>
<dbReference type="KEGG" id="lmo:lmo0855"/>
<dbReference type="PATRIC" id="fig|169963.11.peg.879"/>
<dbReference type="eggNOG" id="COG1181">
    <property type="taxonomic scope" value="Bacteria"/>
</dbReference>
<dbReference type="HOGENOM" id="CLU_039268_0_0_9"/>
<dbReference type="OrthoDB" id="9813261at2"/>
<dbReference type="PhylomeDB" id="Q8Y8P1"/>
<dbReference type="BioCyc" id="LMON169963:LMO0855-MONOMER"/>
<dbReference type="UniPathway" id="UPA00219"/>
<dbReference type="Proteomes" id="UP000000817">
    <property type="component" value="Chromosome"/>
</dbReference>
<dbReference type="GO" id="GO:0005829">
    <property type="term" value="C:cytosol"/>
    <property type="evidence" value="ECO:0000318"/>
    <property type="project" value="GO_Central"/>
</dbReference>
<dbReference type="GO" id="GO:0005524">
    <property type="term" value="F:ATP binding"/>
    <property type="evidence" value="ECO:0007669"/>
    <property type="project" value="UniProtKB-KW"/>
</dbReference>
<dbReference type="GO" id="GO:0008716">
    <property type="term" value="F:D-alanine-D-alanine ligase activity"/>
    <property type="evidence" value="ECO:0000318"/>
    <property type="project" value="GO_Central"/>
</dbReference>
<dbReference type="GO" id="GO:0046872">
    <property type="term" value="F:metal ion binding"/>
    <property type="evidence" value="ECO:0007669"/>
    <property type="project" value="UniProtKB-KW"/>
</dbReference>
<dbReference type="GO" id="GO:0071555">
    <property type="term" value="P:cell wall organization"/>
    <property type="evidence" value="ECO:0007669"/>
    <property type="project" value="UniProtKB-KW"/>
</dbReference>
<dbReference type="GO" id="GO:0009252">
    <property type="term" value="P:peptidoglycan biosynthetic process"/>
    <property type="evidence" value="ECO:0000318"/>
    <property type="project" value="GO_Central"/>
</dbReference>
<dbReference type="GO" id="GO:0008360">
    <property type="term" value="P:regulation of cell shape"/>
    <property type="evidence" value="ECO:0007669"/>
    <property type="project" value="UniProtKB-KW"/>
</dbReference>
<dbReference type="FunFam" id="3.30.1490.20:FF:000007">
    <property type="entry name" value="D-alanine--D-alanine ligase"/>
    <property type="match status" value="1"/>
</dbReference>
<dbReference type="FunFam" id="3.30.470.20:FF:000008">
    <property type="entry name" value="D-alanine--D-alanine ligase"/>
    <property type="match status" value="1"/>
</dbReference>
<dbReference type="FunFam" id="3.40.50.20:FF:000020">
    <property type="entry name" value="D-alanine--D-alanine ligase"/>
    <property type="match status" value="1"/>
</dbReference>
<dbReference type="Gene3D" id="3.40.50.20">
    <property type="match status" value="1"/>
</dbReference>
<dbReference type="Gene3D" id="3.30.1490.20">
    <property type="entry name" value="ATP-grasp fold, A domain"/>
    <property type="match status" value="1"/>
</dbReference>
<dbReference type="Gene3D" id="3.30.470.20">
    <property type="entry name" value="ATP-grasp fold, B domain"/>
    <property type="match status" value="1"/>
</dbReference>
<dbReference type="HAMAP" id="MF_00047">
    <property type="entry name" value="Dala_Dala_lig"/>
    <property type="match status" value="1"/>
</dbReference>
<dbReference type="InterPro" id="IPR011761">
    <property type="entry name" value="ATP-grasp"/>
</dbReference>
<dbReference type="InterPro" id="IPR013815">
    <property type="entry name" value="ATP_grasp_subdomain_1"/>
</dbReference>
<dbReference type="InterPro" id="IPR000291">
    <property type="entry name" value="D-Ala_lig_Van_CS"/>
</dbReference>
<dbReference type="InterPro" id="IPR005905">
    <property type="entry name" value="D_ala_D_ala"/>
</dbReference>
<dbReference type="InterPro" id="IPR011095">
    <property type="entry name" value="Dala_Dala_lig_C"/>
</dbReference>
<dbReference type="InterPro" id="IPR011127">
    <property type="entry name" value="Dala_Dala_lig_N"/>
</dbReference>
<dbReference type="InterPro" id="IPR016185">
    <property type="entry name" value="PreATP-grasp_dom_sf"/>
</dbReference>
<dbReference type="NCBIfam" id="TIGR01205">
    <property type="entry name" value="D_ala_D_alaTIGR"/>
    <property type="match status" value="1"/>
</dbReference>
<dbReference type="NCBIfam" id="NF002526">
    <property type="entry name" value="PRK01966.1-2"/>
    <property type="match status" value="1"/>
</dbReference>
<dbReference type="NCBIfam" id="NF002528">
    <property type="entry name" value="PRK01966.1-4"/>
    <property type="match status" value="1"/>
</dbReference>
<dbReference type="PANTHER" id="PTHR23132">
    <property type="entry name" value="D-ALANINE--D-ALANINE LIGASE"/>
    <property type="match status" value="1"/>
</dbReference>
<dbReference type="PANTHER" id="PTHR23132:SF25">
    <property type="entry name" value="D-ALANINE--D-ALANINE LIGASE A"/>
    <property type="match status" value="1"/>
</dbReference>
<dbReference type="Pfam" id="PF07478">
    <property type="entry name" value="Dala_Dala_lig_C"/>
    <property type="match status" value="1"/>
</dbReference>
<dbReference type="Pfam" id="PF01820">
    <property type="entry name" value="Dala_Dala_lig_N"/>
    <property type="match status" value="1"/>
</dbReference>
<dbReference type="PIRSF" id="PIRSF039102">
    <property type="entry name" value="Ddl/VanB"/>
    <property type="match status" value="1"/>
</dbReference>
<dbReference type="SUPFAM" id="SSF56059">
    <property type="entry name" value="Glutathione synthetase ATP-binding domain-like"/>
    <property type="match status" value="1"/>
</dbReference>
<dbReference type="SUPFAM" id="SSF52440">
    <property type="entry name" value="PreATP-grasp domain"/>
    <property type="match status" value="1"/>
</dbReference>
<dbReference type="PROSITE" id="PS50975">
    <property type="entry name" value="ATP_GRASP"/>
    <property type="match status" value="1"/>
</dbReference>
<dbReference type="PROSITE" id="PS00843">
    <property type="entry name" value="DALA_DALA_LIGASE_1"/>
    <property type="match status" value="1"/>
</dbReference>
<dbReference type="PROSITE" id="PS00844">
    <property type="entry name" value="DALA_DALA_LIGASE_2"/>
    <property type="match status" value="1"/>
</dbReference>
<feature type="chain" id="PRO_0000177839" description="D-alanine--D-alanine ligase">
    <location>
        <begin position="1"/>
        <end position="370"/>
    </location>
</feature>
<feature type="domain" description="ATP-grasp" evidence="2">
    <location>
        <begin position="144"/>
        <end position="352"/>
    </location>
</feature>
<feature type="binding site" evidence="2">
    <location>
        <begin position="177"/>
        <end position="232"/>
    </location>
    <ligand>
        <name>ATP</name>
        <dbReference type="ChEBI" id="CHEBI:30616"/>
    </ligand>
</feature>
<feature type="binding site" evidence="2">
    <location>
        <position position="306"/>
    </location>
    <ligand>
        <name>Mg(2+)</name>
        <dbReference type="ChEBI" id="CHEBI:18420"/>
        <label>1</label>
    </ligand>
</feature>
<feature type="binding site" evidence="2">
    <location>
        <position position="319"/>
    </location>
    <ligand>
        <name>Mg(2+)</name>
        <dbReference type="ChEBI" id="CHEBI:18420"/>
        <label>1</label>
    </ligand>
</feature>
<feature type="binding site" evidence="2">
    <location>
        <position position="319"/>
    </location>
    <ligand>
        <name>Mg(2+)</name>
        <dbReference type="ChEBI" id="CHEBI:18420"/>
        <label>2</label>
    </ligand>
</feature>
<feature type="binding site" evidence="2">
    <location>
        <position position="321"/>
    </location>
    <ligand>
        <name>Mg(2+)</name>
        <dbReference type="ChEBI" id="CHEBI:18420"/>
        <label>2</label>
    </ligand>
</feature>
<sequence>MKTKLILLYGGKSAEHEVSLQTAFSVINALDLEKFEAAPIYITNEGEWIQGPLLSGKLDFVEQLRFSATDTIKLATTESEKSEGEAISPAVLEADGQETVVFPLLHGPNGEDGTVQGLFEVLNIPYVGNGVLASSAAMDKIVMKKIFADAGIPQVPAVAVRLIDWKNYQEEMVAEMEEVLTYPVFVKPANLGSSVGISKATNKKELVDAMTEAFLYDRRVVVEQGVVAREIEMGVLGNDTPVCSVPGEILPEGAVATFYDYKAKYQDNNTALIIPTEVDPEILEQMKEYAIQAFLGLDASGLVRADFFLTEDNQLFLNEVNTMPGFTPYSMYPLLWQETGLPYGALIERLVDLAKERHAAKNALKYKLED</sequence>
<gene>
    <name evidence="2" type="primary">ddl</name>
    <name type="synonym">ddlA</name>
    <name type="ordered locus">lmo0855</name>
</gene>
<accession>Q8Y8P1</accession>
<proteinExistence type="inferred from homology"/>
<keyword id="KW-0067">ATP-binding</keyword>
<keyword id="KW-0133">Cell shape</keyword>
<keyword id="KW-0961">Cell wall biogenesis/degradation</keyword>
<keyword id="KW-0963">Cytoplasm</keyword>
<keyword id="KW-0436">Ligase</keyword>
<keyword id="KW-0460">Magnesium</keyword>
<keyword id="KW-0464">Manganese</keyword>
<keyword id="KW-0479">Metal-binding</keyword>
<keyword id="KW-0547">Nucleotide-binding</keyword>
<keyword id="KW-0573">Peptidoglycan synthesis</keyword>
<keyword id="KW-1185">Reference proteome</keyword>
<protein>
    <recommendedName>
        <fullName evidence="2">D-alanine--D-alanine ligase</fullName>
        <ecNumber evidence="2">6.3.2.4</ecNumber>
    </recommendedName>
    <alternativeName>
        <fullName evidence="2">D-Ala-D-Ala ligase</fullName>
    </alternativeName>
    <alternativeName>
        <fullName evidence="2">D-alanylalanine synthetase</fullName>
    </alternativeName>
</protein>
<comment type="function">
    <text evidence="2">Cell wall formation.</text>
</comment>
<comment type="catalytic activity">
    <reaction evidence="2">
        <text>2 D-alanine + ATP = D-alanyl-D-alanine + ADP + phosphate + H(+)</text>
        <dbReference type="Rhea" id="RHEA:11224"/>
        <dbReference type="ChEBI" id="CHEBI:15378"/>
        <dbReference type="ChEBI" id="CHEBI:30616"/>
        <dbReference type="ChEBI" id="CHEBI:43474"/>
        <dbReference type="ChEBI" id="CHEBI:57416"/>
        <dbReference type="ChEBI" id="CHEBI:57822"/>
        <dbReference type="ChEBI" id="CHEBI:456216"/>
        <dbReference type="EC" id="6.3.2.4"/>
    </reaction>
</comment>
<comment type="cofactor">
    <cofactor evidence="1">
        <name>Mg(2+)</name>
        <dbReference type="ChEBI" id="CHEBI:18420"/>
    </cofactor>
    <cofactor evidence="1">
        <name>Mn(2+)</name>
        <dbReference type="ChEBI" id="CHEBI:29035"/>
    </cofactor>
    <text evidence="1">Binds 2 magnesium or manganese ions per subunit.</text>
</comment>
<comment type="pathway">
    <text evidence="2">Cell wall biogenesis; peptidoglycan biosynthesis.</text>
</comment>
<comment type="subcellular location">
    <subcellularLocation>
        <location evidence="2">Cytoplasm</location>
    </subcellularLocation>
</comment>
<comment type="similarity">
    <text evidence="2">Belongs to the D-alanine--D-alanine ligase family.</text>
</comment>
<name>DDL_LISMO</name>
<organism>
    <name type="scientific">Listeria monocytogenes serovar 1/2a (strain ATCC BAA-679 / EGD-e)</name>
    <dbReference type="NCBI Taxonomy" id="169963"/>
    <lineage>
        <taxon>Bacteria</taxon>
        <taxon>Bacillati</taxon>
        <taxon>Bacillota</taxon>
        <taxon>Bacilli</taxon>
        <taxon>Bacillales</taxon>
        <taxon>Listeriaceae</taxon>
        <taxon>Listeria</taxon>
    </lineage>
</organism>